<protein>
    <recommendedName>
        <fullName evidence="1">Large ribosomal subunit protein uL14</fullName>
    </recommendedName>
    <alternativeName>
        <fullName evidence="2">50S ribosomal protein L14</fullName>
    </alternativeName>
</protein>
<sequence length="122" mass="13454">MIQTESRLEVADNTGAREVMCIKVLGGSKRRYASIGDIIKVSVKEATPRGRVKKGEIYNAVVVRTAKGVRRQDGSLIKFDGNAAVLLNNKLEPIGTRIFGPVTRELRSERFMKIVSLAPEVL</sequence>
<evidence type="ECO:0000255" key="1">
    <source>
        <dbReference type="HAMAP-Rule" id="MF_01367"/>
    </source>
</evidence>
<evidence type="ECO:0000305" key="2"/>
<comment type="function">
    <text evidence="1">Binds to 23S rRNA. Forms part of two intersubunit bridges in the 70S ribosome.</text>
</comment>
<comment type="subunit">
    <text evidence="1">Part of the 50S ribosomal subunit. Forms a cluster with proteins L3 and L19. In the 70S ribosome, L14 and L19 interact and together make contacts with the 16S rRNA in bridges B5 and B8.</text>
</comment>
<comment type="similarity">
    <text evidence="1">Belongs to the universal ribosomal protein uL14 family.</text>
</comment>
<name>RL14_BURPS</name>
<reference key="1">
    <citation type="journal article" date="2004" name="Proc. Natl. Acad. Sci. U.S.A.">
        <title>Genomic plasticity of the causative agent of melioidosis, Burkholderia pseudomallei.</title>
        <authorList>
            <person name="Holden M.T.G."/>
            <person name="Titball R.W."/>
            <person name="Peacock S.J."/>
            <person name="Cerdeno-Tarraga A.-M."/>
            <person name="Atkins T."/>
            <person name="Crossman L.C."/>
            <person name="Pitt T."/>
            <person name="Churcher C."/>
            <person name="Mungall K.L."/>
            <person name="Bentley S.D."/>
            <person name="Sebaihia M."/>
            <person name="Thomson N.R."/>
            <person name="Bason N."/>
            <person name="Beacham I.R."/>
            <person name="Brooks K."/>
            <person name="Brown K.A."/>
            <person name="Brown N.F."/>
            <person name="Challis G.L."/>
            <person name="Cherevach I."/>
            <person name="Chillingworth T."/>
            <person name="Cronin A."/>
            <person name="Crossett B."/>
            <person name="Davis P."/>
            <person name="DeShazer D."/>
            <person name="Feltwell T."/>
            <person name="Fraser A."/>
            <person name="Hance Z."/>
            <person name="Hauser H."/>
            <person name="Holroyd S."/>
            <person name="Jagels K."/>
            <person name="Keith K.E."/>
            <person name="Maddison M."/>
            <person name="Moule S."/>
            <person name="Price C."/>
            <person name="Quail M.A."/>
            <person name="Rabbinowitsch E."/>
            <person name="Rutherford K."/>
            <person name="Sanders M."/>
            <person name="Simmonds M."/>
            <person name="Songsivilai S."/>
            <person name="Stevens K."/>
            <person name="Tumapa S."/>
            <person name="Vesaratchavest M."/>
            <person name="Whitehead S."/>
            <person name="Yeats C."/>
            <person name="Barrell B.G."/>
            <person name="Oyston P.C.F."/>
            <person name="Parkhill J."/>
        </authorList>
    </citation>
    <scope>NUCLEOTIDE SEQUENCE [LARGE SCALE GENOMIC DNA]</scope>
    <source>
        <strain>K96243</strain>
    </source>
</reference>
<feature type="chain" id="PRO_0000266462" description="Large ribosomal subunit protein uL14">
    <location>
        <begin position="1"/>
        <end position="122"/>
    </location>
</feature>
<proteinExistence type="inferred from homology"/>
<gene>
    <name evidence="1" type="primary">rplN</name>
    <name type="ordered locus">BPSL3203</name>
</gene>
<dbReference type="EMBL" id="BX571965">
    <property type="protein sequence ID" value="CAH37214.1"/>
    <property type="molecule type" value="Genomic_DNA"/>
</dbReference>
<dbReference type="RefSeq" id="WP_004197951.1">
    <property type="nucleotide sequence ID" value="NZ_CP009538.1"/>
</dbReference>
<dbReference type="RefSeq" id="YP_109797.1">
    <property type="nucleotide sequence ID" value="NC_006350.1"/>
</dbReference>
<dbReference type="SMR" id="Q63Q21"/>
<dbReference type="STRING" id="272560.BPSL3203"/>
<dbReference type="GeneID" id="93171007"/>
<dbReference type="KEGG" id="bps:BPSL3203"/>
<dbReference type="PATRIC" id="fig|272560.51.peg.2035"/>
<dbReference type="eggNOG" id="COG0093">
    <property type="taxonomic scope" value="Bacteria"/>
</dbReference>
<dbReference type="PRO" id="PR:Q63Q21"/>
<dbReference type="Proteomes" id="UP000000605">
    <property type="component" value="Chromosome 1"/>
</dbReference>
<dbReference type="GO" id="GO:0022625">
    <property type="term" value="C:cytosolic large ribosomal subunit"/>
    <property type="evidence" value="ECO:0007669"/>
    <property type="project" value="TreeGrafter"/>
</dbReference>
<dbReference type="GO" id="GO:0070180">
    <property type="term" value="F:large ribosomal subunit rRNA binding"/>
    <property type="evidence" value="ECO:0007669"/>
    <property type="project" value="TreeGrafter"/>
</dbReference>
<dbReference type="GO" id="GO:0003735">
    <property type="term" value="F:structural constituent of ribosome"/>
    <property type="evidence" value="ECO:0007669"/>
    <property type="project" value="InterPro"/>
</dbReference>
<dbReference type="GO" id="GO:0006412">
    <property type="term" value="P:translation"/>
    <property type="evidence" value="ECO:0007669"/>
    <property type="project" value="UniProtKB-UniRule"/>
</dbReference>
<dbReference type="CDD" id="cd00337">
    <property type="entry name" value="Ribosomal_uL14"/>
    <property type="match status" value="1"/>
</dbReference>
<dbReference type="FunFam" id="2.40.150.20:FF:000001">
    <property type="entry name" value="50S ribosomal protein L14"/>
    <property type="match status" value="1"/>
</dbReference>
<dbReference type="Gene3D" id="2.40.150.20">
    <property type="entry name" value="Ribosomal protein L14"/>
    <property type="match status" value="1"/>
</dbReference>
<dbReference type="HAMAP" id="MF_01367">
    <property type="entry name" value="Ribosomal_uL14"/>
    <property type="match status" value="1"/>
</dbReference>
<dbReference type="InterPro" id="IPR000218">
    <property type="entry name" value="Ribosomal_uL14"/>
</dbReference>
<dbReference type="InterPro" id="IPR005745">
    <property type="entry name" value="Ribosomal_uL14_bac-type"/>
</dbReference>
<dbReference type="InterPro" id="IPR019972">
    <property type="entry name" value="Ribosomal_uL14_CS"/>
</dbReference>
<dbReference type="InterPro" id="IPR036853">
    <property type="entry name" value="Ribosomal_uL14_sf"/>
</dbReference>
<dbReference type="NCBIfam" id="TIGR01067">
    <property type="entry name" value="rplN_bact"/>
    <property type="match status" value="1"/>
</dbReference>
<dbReference type="PANTHER" id="PTHR11761">
    <property type="entry name" value="50S/60S RIBOSOMAL PROTEIN L14/L23"/>
    <property type="match status" value="1"/>
</dbReference>
<dbReference type="PANTHER" id="PTHR11761:SF3">
    <property type="entry name" value="LARGE RIBOSOMAL SUBUNIT PROTEIN UL14M"/>
    <property type="match status" value="1"/>
</dbReference>
<dbReference type="Pfam" id="PF00238">
    <property type="entry name" value="Ribosomal_L14"/>
    <property type="match status" value="1"/>
</dbReference>
<dbReference type="SMART" id="SM01374">
    <property type="entry name" value="Ribosomal_L14"/>
    <property type="match status" value="1"/>
</dbReference>
<dbReference type="SUPFAM" id="SSF50193">
    <property type="entry name" value="Ribosomal protein L14"/>
    <property type="match status" value="1"/>
</dbReference>
<dbReference type="PROSITE" id="PS00049">
    <property type="entry name" value="RIBOSOMAL_L14"/>
    <property type="match status" value="1"/>
</dbReference>
<keyword id="KW-1185">Reference proteome</keyword>
<keyword id="KW-0687">Ribonucleoprotein</keyword>
<keyword id="KW-0689">Ribosomal protein</keyword>
<keyword id="KW-0694">RNA-binding</keyword>
<keyword id="KW-0699">rRNA-binding</keyword>
<accession>Q63Q21</accession>
<organism>
    <name type="scientific">Burkholderia pseudomallei (strain K96243)</name>
    <dbReference type="NCBI Taxonomy" id="272560"/>
    <lineage>
        <taxon>Bacteria</taxon>
        <taxon>Pseudomonadati</taxon>
        <taxon>Pseudomonadota</taxon>
        <taxon>Betaproteobacteria</taxon>
        <taxon>Burkholderiales</taxon>
        <taxon>Burkholderiaceae</taxon>
        <taxon>Burkholderia</taxon>
        <taxon>pseudomallei group</taxon>
    </lineage>
</organism>